<reference key="1">
    <citation type="journal article" date="2002" name="DNA Res.">
        <title>Complete genome structure of the thermophilic cyanobacterium Thermosynechococcus elongatus BP-1.</title>
        <authorList>
            <person name="Nakamura Y."/>
            <person name="Kaneko T."/>
            <person name="Sato S."/>
            <person name="Ikeuchi M."/>
            <person name="Katoh H."/>
            <person name="Sasamoto S."/>
            <person name="Watanabe A."/>
            <person name="Iriguchi M."/>
            <person name="Kawashima K."/>
            <person name="Kimura T."/>
            <person name="Kishida Y."/>
            <person name="Kiyokawa C."/>
            <person name="Kohara M."/>
            <person name="Matsumoto M."/>
            <person name="Matsuno A."/>
            <person name="Nakazaki N."/>
            <person name="Shimpo S."/>
            <person name="Sugimoto M."/>
            <person name="Takeuchi C."/>
            <person name="Yamada M."/>
            <person name="Tabata S."/>
        </authorList>
    </citation>
    <scope>NUCLEOTIDE SEQUENCE [LARGE SCALE GENOMIC DNA]</scope>
    <source>
        <strain>NIES-2133 / IAM M-273 / BP-1</strain>
    </source>
</reference>
<proteinExistence type="inferred from homology"/>
<keyword id="KW-0028">Amino-acid biosynthesis</keyword>
<keyword id="KW-0055">Arginine biosynthesis</keyword>
<keyword id="KW-0067">ATP-binding</keyword>
<keyword id="KW-0315">Glutamine amidotransferase</keyword>
<keyword id="KW-0436">Ligase</keyword>
<keyword id="KW-0547">Nucleotide-binding</keyword>
<keyword id="KW-0665">Pyrimidine biosynthesis</keyword>
<keyword id="KW-1185">Reference proteome</keyword>
<name>CARA_THEVB</name>
<sequence>MPTPALLVLADGSVFRGFSFGAPGTAIGEVVFNTGMTGYQEVLTDPSYYGQIVTFTYPELGNTGTTPEDDESDRPQVRGAVARNICDIPSNWRSQQSLPDYLKAHRIPAIYGIDTRALTRKIRTVGAMNGGISTEILDPVELLQKVLAAPSMQGQNLAKVVTTRTPYEWTEPTPAAWEFRPQTATEEPPLTVVAIDFGVKRNILRRLASYGCRVIVVPADTPAETILSYDPDGIFLSNGPGDPAAVQEGIETTRKLLGAQRPMFGICLGHQLLGLSLGAETFKLKFGHRGLNQPAGLTQEVEITSQNHGFAITAESLAQTPVEITHFNLNDKTVAGLKHQTLPIFSVQYHPEASPGPHDADYLFGEFVAQMRAYRQQHPRRQ</sequence>
<evidence type="ECO:0000255" key="1">
    <source>
        <dbReference type="HAMAP-Rule" id="MF_01209"/>
    </source>
</evidence>
<gene>
    <name evidence="1" type="primary">carA</name>
    <name type="ordered locus">tll0760</name>
</gene>
<organism>
    <name type="scientific">Thermosynechococcus vestitus (strain NIES-2133 / IAM M-273 / BP-1)</name>
    <dbReference type="NCBI Taxonomy" id="197221"/>
    <lineage>
        <taxon>Bacteria</taxon>
        <taxon>Bacillati</taxon>
        <taxon>Cyanobacteriota</taxon>
        <taxon>Cyanophyceae</taxon>
        <taxon>Acaryochloridales</taxon>
        <taxon>Thermosynechococcaceae</taxon>
        <taxon>Thermosynechococcus</taxon>
    </lineage>
</organism>
<dbReference type="EC" id="6.3.5.5" evidence="1"/>
<dbReference type="EMBL" id="BA000039">
    <property type="protein sequence ID" value="BAC08311.1"/>
    <property type="molecule type" value="Genomic_DNA"/>
</dbReference>
<dbReference type="RefSeq" id="NP_681549.1">
    <property type="nucleotide sequence ID" value="NC_004113.1"/>
</dbReference>
<dbReference type="RefSeq" id="WP_011056605.1">
    <property type="nucleotide sequence ID" value="NC_004113.1"/>
</dbReference>
<dbReference type="SMR" id="Q8DKU5"/>
<dbReference type="STRING" id="197221.gene:10747351"/>
<dbReference type="EnsemblBacteria" id="BAC08311">
    <property type="protein sequence ID" value="BAC08311"/>
    <property type="gene ID" value="BAC08311"/>
</dbReference>
<dbReference type="KEGG" id="tel:tll0760"/>
<dbReference type="PATRIC" id="fig|197221.4.peg.799"/>
<dbReference type="eggNOG" id="COG0505">
    <property type="taxonomic scope" value="Bacteria"/>
</dbReference>
<dbReference type="UniPathway" id="UPA00068">
    <property type="reaction ID" value="UER00171"/>
</dbReference>
<dbReference type="UniPathway" id="UPA00070">
    <property type="reaction ID" value="UER00115"/>
</dbReference>
<dbReference type="Proteomes" id="UP000000440">
    <property type="component" value="Chromosome"/>
</dbReference>
<dbReference type="GO" id="GO:0005524">
    <property type="term" value="F:ATP binding"/>
    <property type="evidence" value="ECO:0007669"/>
    <property type="project" value="UniProtKB-UniRule"/>
</dbReference>
<dbReference type="GO" id="GO:0004088">
    <property type="term" value="F:carbamoyl-phosphate synthase (glutamine-hydrolyzing) activity"/>
    <property type="evidence" value="ECO:0007669"/>
    <property type="project" value="UniProtKB-UniRule"/>
</dbReference>
<dbReference type="GO" id="GO:0004359">
    <property type="term" value="F:glutaminase activity"/>
    <property type="evidence" value="ECO:0007669"/>
    <property type="project" value="RHEA"/>
</dbReference>
<dbReference type="GO" id="GO:0006207">
    <property type="term" value="P:'de novo' pyrimidine nucleobase biosynthetic process"/>
    <property type="evidence" value="ECO:0007669"/>
    <property type="project" value="InterPro"/>
</dbReference>
<dbReference type="GO" id="GO:0044205">
    <property type="term" value="P:'de novo' UMP biosynthetic process"/>
    <property type="evidence" value="ECO:0007669"/>
    <property type="project" value="UniProtKB-UniRule"/>
</dbReference>
<dbReference type="GO" id="GO:0006541">
    <property type="term" value="P:glutamine metabolic process"/>
    <property type="evidence" value="ECO:0007669"/>
    <property type="project" value="InterPro"/>
</dbReference>
<dbReference type="GO" id="GO:0006526">
    <property type="term" value="P:L-arginine biosynthetic process"/>
    <property type="evidence" value="ECO:0007669"/>
    <property type="project" value="UniProtKB-UniRule"/>
</dbReference>
<dbReference type="CDD" id="cd01744">
    <property type="entry name" value="GATase1_CPSase"/>
    <property type="match status" value="1"/>
</dbReference>
<dbReference type="FunFam" id="3.50.30.20:FF:000001">
    <property type="entry name" value="Carbamoyl-phosphate synthase small chain"/>
    <property type="match status" value="1"/>
</dbReference>
<dbReference type="Gene3D" id="3.40.50.880">
    <property type="match status" value="1"/>
</dbReference>
<dbReference type="Gene3D" id="3.50.30.20">
    <property type="entry name" value="Carbamoyl-phosphate synthase small subunit, N-terminal domain"/>
    <property type="match status" value="1"/>
</dbReference>
<dbReference type="HAMAP" id="MF_01209">
    <property type="entry name" value="CPSase_S_chain"/>
    <property type="match status" value="1"/>
</dbReference>
<dbReference type="InterPro" id="IPR050472">
    <property type="entry name" value="Anth_synth/Amidotransfase"/>
</dbReference>
<dbReference type="InterPro" id="IPR006274">
    <property type="entry name" value="CarbamoylP_synth_ssu"/>
</dbReference>
<dbReference type="InterPro" id="IPR002474">
    <property type="entry name" value="CarbamoylP_synth_ssu_N"/>
</dbReference>
<dbReference type="InterPro" id="IPR036480">
    <property type="entry name" value="CarbP_synth_ssu_N_sf"/>
</dbReference>
<dbReference type="InterPro" id="IPR029062">
    <property type="entry name" value="Class_I_gatase-like"/>
</dbReference>
<dbReference type="InterPro" id="IPR035686">
    <property type="entry name" value="CPSase_GATase1"/>
</dbReference>
<dbReference type="InterPro" id="IPR017926">
    <property type="entry name" value="GATASE"/>
</dbReference>
<dbReference type="NCBIfam" id="TIGR01368">
    <property type="entry name" value="CPSaseIIsmall"/>
    <property type="match status" value="1"/>
</dbReference>
<dbReference type="NCBIfam" id="NF009475">
    <property type="entry name" value="PRK12838.1"/>
    <property type="match status" value="1"/>
</dbReference>
<dbReference type="PANTHER" id="PTHR43418:SF7">
    <property type="entry name" value="CARBAMOYL-PHOSPHATE SYNTHASE SMALL CHAIN"/>
    <property type="match status" value="1"/>
</dbReference>
<dbReference type="PANTHER" id="PTHR43418">
    <property type="entry name" value="MULTIFUNCTIONAL TRYPTOPHAN BIOSYNTHESIS PROTEIN-RELATED"/>
    <property type="match status" value="1"/>
</dbReference>
<dbReference type="Pfam" id="PF00988">
    <property type="entry name" value="CPSase_sm_chain"/>
    <property type="match status" value="1"/>
</dbReference>
<dbReference type="Pfam" id="PF00117">
    <property type="entry name" value="GATase"/>
    <property type="match status" value="1"/>
</dbReference>
<dbReference type="PRINTS" id="PR00097">
    <property type="entry name" value="ANTSNTHASEII"/>
</dbReference>
<dbReference type="PRINTS" id="PR00099">
    <property type="entry name" value="CPSGATASE"/>
</dbReference>
<dbReference type="PRINTS" id="PR00096">
    <property type="entry name" value="GATASE"/>
</dbReference>
<dbReference type="SMART" id="SM01097">
    <property type="entry name" value="CPSase_sm_chain"/>
    <property type="match status" value="1"/>
</dbReference>
<dbReference type="SUPFAM" id="SSF52021">
    <property type="entry name" value="Carbamoyl phosphate synthetase, small subunit N-terminal domain"/>
    <property type="match status" value="1"/>
</dbReference>
<dbReference type="SUPFAM" id="SSF52317">
    <property type="entry name" value="Class I glutamine amidotransferase-like"/>
    <property type="match status" value="1"/>
</dbReference>
<dbReference type="PROSITE" id="PS51273">
    <property type="entry name" value="GATASE_TYPE_1"/>
    <property type="match status" value="1"/>
</dbReference>
<comment type="function">
    <text evidence="1">Small subunit of the glutamine-dependent carbamoyl phosphate synthetase (CPSase). CPSase catalyzes the formation of carbamoyl phosphate from the ammonia moiety of glutamine, carbonate, and phosphate donated by ATP, constituting the first step of 2 biosynthetic pathways, one leading to arginine and/or urea and the other to pyrimidine nucleotides. The small subunit (glutamine amidotransferase) binds and cleaves glutamine to supply the large subunit with the substrate ammonia.</text>
</comment>
<comment type="catalytic activity">
    <reaction evidence="1">
        <text>hydrogencarbonate + L-glutamine + 2 ATP + H2O = carbamoyl phosphate + L-glutamate + 2 ADP + phosphate + 2 H(+)</text>
        <dbReference type="Rhea" id="RHEA:18633"/>
        <dbReference type="ChEBI" id="CHEBI:15377"/>
        <dbReference type="ChEBI" id="CHEBI:15378"/>
        <dbReference type="ChEBI" id="CHEBI:17544"/>
        <dbReference type="ChEBI" id="CHEBI:29985"/>
        <dbReference type="ChEBI" id="CHEBI:30616"/>
        <dbReference type="ChEBI" id="CHEBI:43474"/>
        <dbReference type="ChEBI" id="CHEBI:58228"/>
        <dbReference type="ChEBI" id="CHEBI:58359"/>
        <dbReference type="ChEBI" id="CHEBI:456216"/>
        <dbReference type="EC" id="6.3.5.5"/>
    </reaction>
</comment>
<comment type="catalytic activity">
    <molecule>Carbamoyl phosphate synthase small chain</molecule>
    <reaction evidence="1">
        <text>L-glutamine + H2O = L-glutamate + NH4(+)</text>
        <dbReference type="Rhea" id="RHEA:15889"/>
        <dbReference type="ChEBI" id="CHEBI:15377"/>
        <dbReference type="ChEBI" id="CHEBI:28938"/>
        <dbReference type="ChEBI" id="CHEBI:29985"/>
        <dbReference type="ChEBI" id="CHEBI:58359"/>
    </reaction>
</comment>
<comment type="pathway">
    <text evidence="1">Amino-acid biosynthesis; L-arginine biosynthesis; carbamoyl phosphate from bicarbonate: step 1/1.</text>
</comment>
<comment type="pathway">
    <text evidence="1">Pyrimidine metabolism; UMP biosynthesis via de novo pathway; (S)-dihydroorotate from bicarbonate: step 1/3.</text>
</comment>
<comment type="subunit">
    <text evidence="1">Composed of two chains; the small (or glutamine) chain promotes the hydrolysis of glutamine to ammonia, which is used by the large (or ammonia) chain to synthesize carbamoyl phosphate. Tetramer of heterodimers (alpha,beta)4.</text>
</comment>
<comment type="similarity">
    <text evidence="1">Belongs to the CarA family.</text>
</comment>
<protein>
    <recommendedName>
        <fullName evidence="1">Carbamoyl phosphate synthase small chain</fullName>
        <ecNumber evidence="1">6.3.5.5</ecNumber>
    </recommendedName>
    <alternativeName>
        <fullName evidence="1">Carbamoyl phosphate synthetase glutamine chain</fullName>
    </alternativeName>
</protein>
<accession>Q8DKU5</accession>
<feature type="chain" id="PRO_0000112337" description="Carbamoyl phosphate synthase small chain">
    <location>
        <begin position="1"/>
        <end position="382"/>
    </location>
</feature>
<feature type="domain" description="Glutamine amidotransferase type-1" evidence="1">
    <location>
        <begin position="191"/>
        <end position="377"/>
    </location>
</feature>
<feature type="region of interest" description="CPSase" evidence="1">
    <location>
        <begin position="1"/>
        <end position="187"/>
    </location>
</feature>
<feature type="active site" description="Nucleophile" evidence="1">
    <location>
        <position position="267"/>
    </location>
</feature>
<feature type="active site" evidence="1">
    <location>
        <position position="350"/>
    </location>
</feature>
<feature type="active site" evidence="1">
    <location>
        <position position="352"/>
    </location>
</feature>
<feature type="binding site" evidence="1">
    <location>
        <position position="47"/>
    </location>
    <ligand>
        <name>L-glutamine</name>
        <dbReference type="ChEBI" id="CHEBI:58359"/>
    </ligand>
</feature>
<feature type="binding site" evidence="1">
    <location>
        <position position="239"/>
    </location>
    <ligand>
        <name>L-glutamine</name>
        <dbReference type="ChEBI" id="CHEBI:58359"/>
    </ligand>
</feature>
<feature type="binding site" evidence="1">
    <location>
        <position position="241"/>
    </location>
    <ligand>
        <name>L-glutamine</name>
        <dbReference type="ChEBI" id="CHEBI:58359"/>
    </ligand>
</feature>
<feature type="binding site" evidence="1">
    <location>
        <position position="268"/>
    </location>
    <ligand>
        <name>L-glutamine</name>
        <dbReference type="ChEBI" id="CHEBI:58359"/>
    </ligand>
</feature>
<feature type="binding site" evidence="1">
    <location>
        <position position="271"/>
    </location>
    <ligand>
        <name>L-glutamine</name>
        <dbReference type="ChEBI" id="CHEBI:58359"/>
    </ligand>
</feature>
<feature type="binding site" evidence="1">
    <location>
        <position position="307"/>
    </location>
    <ligand>
        <name>L-glutamine</name>
        <dbReference type="ChEBI" id="CHEBI:58359"/>
    </ligand>
</feature>
<feature type="binding site" evidence="1">
    <location>
        <position position="309"/>
    </location>
    <ligand>
        <name>L-glutamine</name>
        <dbReference type="ChEBI" id="CHEBI:58359"/>
    </ligand>
</feature>
<feature type="binding site" evidence="1">
    <location>
        <position position="310"/>
    </location>
    <ligand>
        <name>L-glutamine</name>
        <dbReference type="ChEBI" id="CHEBI:58359"/>
    </ligand>
</feature>